<accession>A8A520</accession>
<evidence type="ECO:0000255" key="1">
    <source>
        <dbReference type="HAMAP-Rule" id="MF_00636"/>
    </source>
</evidence>
<gene>
    <name evidence="1" type="primary">rapZ</name>
    <name type="ordered locus">EcHS_A3398</name>
</gene>
<proteinExistence type="inferred from homology"/>
<feature type="chain" id="PRO_1000061435" description="RNase adapter protein RapZ">
    <location>
        <begin position="1"/>
        <end position="284"/>
    </location>
</feature>
<feature type="region of interest" description="RNA-binding" evidence="1">
    <location>
        <begin position="266"/>
        <end position="284"/>
    </location>
</feature>
<feature type="binding site" evidence="1">
    <location>
        <begin position="8"/>
        <end position="15"/>
    </location>
    <ligand>
        <name>ATP</name>
        <dbReference type="ChEBI" id="CHEBI:30616"/>
    </ligand>
</feature>
<feature type="binding site" evidence="1">
    <location>
        <begin position="56"/>
        <end position="59"/>
    </location>
    <ligand>
        <name>GTP</name>
        <dbReference type="ChEBI" id="CHEBI:37565"/>
    </ligand>
</feature>
<dbReference type="EMBL" id="CP000802">
    <property type="protein sequence ID" value="ABV07624.1"/>
    <property type="molecule type" value="Genomic_DNA"/>
</dbReference>
<dbReference type="RefSeq" id="WP_000243741.1">
    <property type="nucleotide sequence ID" value="NC_009800.1"/>
</dbReference>
<dbReference type="SMR" id="A8A520"/>
<dbReference type="GeneID" id="93778776"/>
<dbReference type="KEGG" id="ecx:EcHS_A3398"/>
<dbReference type="HOGENOM" id="CLU_059558_1_1_6"/>
<dbReference type="GO" id="GO:0005524">
    <property type="term" value="F:ATP binding"/>
    <property type="evidence" value="ECO:0007669"/>
    <property type="project" value="UniProtKB-UniRule"/>
</dbReference>
<dbReference type="GO" id="GO:0005525">
    <property type="term" value="F:GTP binding"/>
    <property type="evidence" value="ECO:0007669"/>
    <property type="project" value="UniProtKB-UniRule"/>
</dbReference>
<dbReference type="GO" id="GO:0003723">
    <property type="term" value="F:RNA binding"/>
    <property type="evidence" value="ECO:0007669"/>
    <property type="project" value="UniProtKB-KW"/>
</dbReference>
<dbReference type="Gene3D" id="3.40.50.300">
    <property type="entry name" value="P-loop containing nucleotide triphosphate hydrolases"/>
    <property type="match status" value="1"/>
</dbReference>
<dbReference type="HAMAP" id="MF_00636">
    <property type="entry name" value="RapZ_like"/>
    <property type="match status" value="1"/>
</dbReference>
<dbReference type="InterPro" id="IPR027417">
    <property type="entry name" value="P-loop_NTPase"/>
</dbReference>
<dbReference type="InterPro" id="IPR005337">
    <property type="entry name" value="RapZ-like"/>
</dbReference>
<dbReference type="InterPro" id="IPR053930">
    <property type="entry name" value="RapZ-like_N"/>
</dbReference>
<dbReference type="InterPro" id="IPR053931">
    <property type="entry name" value="RapZ_C"/>
</dbReference>
<dbReference type="NCBIfam" id="NF003828">
    <property type="entry name" value="PRK05416.1"/>
    <property type="match status" value="1"/>
</dbReference>
<dbReference type="PANTHER" id="PTHR30448">
    <property type="entry name" value="RNASE ADAPTER PROTEIN RAPZ"/>
    <property type="match status" value="1"/>
</dbReference>
<dbReference type="PANTHER" id="PTHR30448:SF0">
    <property type="entry name" value="RNASE ADAPTER PROTEIN RAPZ"/>
    <property type="match status" value="1"/>
</dbReference>
<dbReference type="Pfam" id="PF22740">
    <property type="entry name" value="PapZ_C"/>
    <property type="match status" value="1"/>
</dbReference>
<dbReference type="Pfam" id="PF03668">
    <property type="entry name" value="RapZ-like_N"/>
    <property type="match status" value="1"/>
</dbReference>
<dbReference type="PIRSF" id="PIRSF005052">
    <property type="entry name" value="P-loopkin"/>
    <property type="match status" value="1"/>
</dbReference>
<dbReference type="SUPFAM" id="SSF52540">
    <property type="entry name" value="P-loop containing nucleoside triphosphate hydrolases"/>
    <property type="match status" value="1"/>
</dbReference>
<reference key="1">
    <citation type="journal article" date="2008" name="J. Bacteriol.">
        <title>The pangenome structure of Escherichia coli: comparative genomic analysis of E. coli commensal and pathogenic isolates.</title>
        <authorList>
            <person name="Rasko D.A."/>
            <person name="Rosovitz M.J."/>
            <person name="Myers G.S.A."/>
            <person name="Mongodin E.F."/>
            <person name="Fricke W.F."/>
            <person name="Gajer P."/>
            <person name="Crabtree J."/>
            <person name="Sebaihia M."/>
            <person name="Thomson N.R."/>
            <person name="Chaudhuri R."/>
            <person name="Henderson I.R."/>
            <person name="Sperandio V."/>
            <person name="Ravel J."/>
        </authorList>
    </citation>
    <scope>NUCLEOTIDE SEQUENCE [LARGE SCALE GENOMIC DNA]</scope>
    <source>
        <strain>HS</strain>
    </source>
</reference>
<comment type="function">
    <text evidence="1">Modulates the synthesis of GlmS, by affecting the processing and stability of the regulatory small RNA GlmZ. When glucosamine-6-phosphate (GlcN6P) concentrations are high in the cell, RapZ binds GlmZ and targets it to cleavage by RNase E. Consequently, GlmZ is inactivated and unable to activate GlmS synthesis. Under low GlcN6P concentrations, RapZ is sequestered and inactivated by an other regulatory small RNA, GlmY, preventing GlmZ degradation and leading to synthesis of GlmS.</text>
</comment>
<comment type="subunit">
    <text evidence="1">Homotrimer.</text>
</comment>
<comment type="similarity">
    <text evidence="1">Belongs to the RapZ-like family. RapZ subfamily.</text>
</comment>
<protein>
    <recommendedName>
        <fullName evidence="1">RNase adapter protein RapZ</fullName>
    </recommendedName>
</protein>
<organism>
    <name type="scientific">Escherichia coli O9:H4 (strain HS)</name>
    <dbReference type="NCBI Taxonomy" id="331112"/>
    <lineage>
        <taxon>Bacteria</taxon>
        <taxon>Pseudomonadati</taxon>
        <taxon>Pseudomonadota</taxon>
        <taxon>Gammaproteobacteria</taxon>
        <taxon>Enterobacterales</taxon>
        <taxon>Enterobacteriaceae</taxon>
        <taxon>Escherichia</taxon>
    </lineage>
</organism>
<sequence>MVLMIVSGRSGSGKSVALRALEDMGFYCVDNLPVVLLPDLARTLADREISAAVSIDVRNMPESPEIFEQAMSNLPDAFSPQLLFLDADRNTLIRRYSDTRRLHPLSSKNLSLESAIDKESDLLEPLRSRADLIVDTSEMSVHELAEMLRTRLLGKRERELTMVFESFGFKHGIPIDADYVFDVRFLPNPHWDPKLRPMTGLDKPVAAFLDRHTEVHNFIYQTRSYLELWLPMLETNNRSYLTVAIGCTGGKHRSVYIAEQLADYFRSRGKNVQSRHRTLEKRKP</sequence>
<keyword id="KW-0067">ATP-binding</keyword>
<keyword id="KW-0342">GTP-binding</keyword>
<keyword id="KW-0547">Nucleotide-binding</keyword>
<keyword id="KW-0694">RNA-binding</keyword>
<name>RAPZ_ECOHS</name>